<organism>
    <name type="scientific">Xenopus tropicalis</name>
    <name type="common">Western clawed frog</name>
    <name type="synonym">Silurana tropicalis</name>
    <dbReference type="NCBI Taxonomy" id="8364"/>
    <lineage>
        <taxon>Eukaryota</taxon>
        <taxon>Metazoa</taxon>
        <taxon>Chordata</taxon>
        <taxon>Craniata</taxon>
        <taxon>Vertebrata</taxon>
        <taxon>Euteleostomi</taxon>
        <taxon>Amphibia</taxon>
        <taxon>Batrachia</taxon>
        <taxon>Anura</taxon>
        <taxon>Pipoidea</taxon>
        <taxon>Pipidae</taxon>
        <taxon>Xenopodinae</taxon>
        <taxon>Xenopus</taxon>
        <taxon>Silurana</taxon>
    </lineage>
</organism>
<sequence length="18" mass="1817">GFLGSLLKTGLKVGSNLL</sequence>
<name>XT6_XENTR</name>
<comment type="function">
    <text evidence="1">Has antimicrobial activity against Gram-positive bacterium S.aureus and Gram-negative bacterium E.coli and strong activity against yeast C.albicans. Enhances the antibacterial activity of XT3. Has strong hemolytic activity against human red blood cells.</text>
</comment>
<comment type="subcellular location">
    <subcellularLocation>
        <location evidence="1">Secreted</location>
    </subcellularLocation>
</comment>
<comment type="tissue specificity">
    <text evidence="1">Expressed by the skin glands.</text>
</comment>
<comment type="mass spectrometry" mass="1816.0" error="0.4" method="Electrospray" evidence="1"/>
<protein>
    <recommendedName>
        <fullName>Antimicrobial peptide 6</fullName>
    </recommendedName>
    <alternativeName>
        <fullName>XT-6</fullName>
    </alternativeName>
</protein>
<feature type="peptide" id="PRO_0000043868" description="Antimicrobial peptide 6">
    <location>
        <begin position="1"/>
        <end position="18"/>
    </location>
</feature>
<feature type="modified residue" description="Leucine amide" evidence="1">
    <location>
        <position position="18"/>
    </location>
</feature>
<accession>P84386</accession>
<keyword id="KW-0027">Amidation</keyword>
<keyword id="KW-0878">Amphibian defense peptide</keyword>
<keyword id="KW-0044">Antibiotic</keyword>
<keyword id="KW-0929">Antimicrobial</keyword>
<keyword id="KW-0204">Cytolysis</keyword>
<keyword id="KW-0903">Direct protein sequencing</keyword>
<keyword id="KW-0295">Fungicide</keyword>
<keyword id="KW-0354">Hemolysis</keyword>
<keyword id="KW-1185">Reference proteome</keyword>
<keyword id="KW-0964">Secreted</keyword>
<evidence type="ECO:0000269" key="1">
    <source>
    </source>
</evidence>
<evidence type="ECO:0000305" key="2"/>
<reference evidence="2" key="1">
    <citation type="journal article" date="2001" name="Biochim. Biophys. Acta">
        <title>Antimicrobial peptides isolated from skin secretions of the diploid frog, Xenopus tropicalis (Pipidae).</title>
        <authorList>
            <person name="Ali M.F."/>
            <person name="Soto A."/>
            <person name="Knoop F.C."/>
            <person name="Conlon J.M."/>
        </authorList>
    </citation>
    <scope>PROTEIN SEQUENCE</scope>
    <scope>FUNCTION</scope>
    <scope>SUBCELLULAR LOCATION</scope>
    <scope>TISSUE SPECIFICITY</scope>
    <scope>AMIDATION AT LEU-18</scope>
    <scope>MASS SPECTROMETRY</scope>
    <source>
        <tissue evidence="1">Skin secretion</tissue>
    </source>
</reference>
<proteinExistence type="evidence at protein level"/>
<dbReference type="InParanoid" id="P84386"/>
<dbReference type="Proteomes" id="UP000008143">
    <property type="component" value="Unplaced"/>
</dbReference>
<dbReference type="GO" id="GO:0005576">
    <property type="term" value="C:extracellular region"/>
    <property type="evidence" value="ECO:0000314"/>
    <property type="project" value="UniProtKB"/>
</dbReference>
<dbReference type="GO" id="GO:0050832">
    <property type="term" value="P:defense response to fungus"/>
    <property type="evidence" value="ECO:0000314"/>
    <property type="project" value="UniProtKB"/>
</dbReference>
<dbReference type="GO" id="GO:0050829">
    <property type="term" value="P:defense response to Gram-negative bacterium"/>
    <property type="evidence" value="ECO:0000314"/>
    <property type="project" value="UniProtKB"/>
</dbReference>
<dbReference type="GO" id="GO:0050830">
    <property type="term" value="P:defense response to Gram-positive bacterium"/>
    <property type="evidence" value="ECO:0000314"/>
    <property type="project" value="UniProtKB"/>
</dbReference>
<dbReference type="GO" id="GO:0044179">
    <property type="term" value="P:hemolysis in another organism"/>
    <property type="evidence" value="ECO:0000314"/>
    <property type="project" value="UniProtKB"/>
</dbReference>